<reference key="1">
    <citation type="journal article" date="2001" name="Proc. Natl. Acad. Sci. U.S.A.">
        <title>Complete genome sequence of Caulobacter crescentus.</title>
        <authorList>
            <person name="Nierman W.C."/>
            <person name="Feldblyum T.V."/>
            <person name="Laub M.T."/>
            <person name="Paulsen I.T."/>
            <person name="Nelson K.E."/>
            <person name="Eisen J.A."/>
            <person name="Heidelberg J.F."/>
            <person name="Alley M.R.K."/>
            <person name="Ohta N."/>
            <person name="Maddock J.R."/>
            <person name="Potocka I."/>
            <person name="Nelson W.C."/>
            <person name="Newton A."/>
            <person name="Stephens C."/>
            <person name="Phadke N.D."/>
            <person name="Ely B."/>
            <person name="DeBoy R.T."/>
            <person name="Dodson R.J."/>
            <person name="Durkin A.S."/>
            <person name="Gwinn M.L."/>
            <person name="Haft D.H."/>
            <person name="Kolonay J.F."/>
            <person name="Smit J."/>
            <person name="Craven M.B."/>
            <person name="Khouri H.M."/>
            <person name="Shetty J."/>
            <person name="Berry K.J."/>
            <person name="Utterback T.R."/>
            <person name="Tran K."/>
            <person name="Wolf A.M."/>
            <person name="Vamathevan J.J."/>
            <person name="Ermolaeva M.D."/>
            <person name="White O."/>
            <person name="Salzberg S.L."/>
            <person name="Venter J.C."/>
            <person name="Shapiro L."/>
            <person name="Fraser C.M."/>
        </authorList>
    </citation>
    <scope>NUCLEOTIDE SEQUENCE [LARGE SCALE GENOMIC DNA]</scope>
    <source>
        <strain>ATCC 19089 / CIP 103742 / CB 15</strain>
    </source>
</reference>
<dbReference type="EMBL" id="AE005673">
    <property type="protein sequence ID" value="AAK23179.1"/>
    <property type="molecule type" value="Genomic_DNA"/>
</dbReference>
<dbReference type="PIR" id="G87397">
    <property type="entry name" value="G87397"/>
</dbReference>
<dbReference type="RefSeq" id="NP_420011.1">
    <property type="nucleotide sequence ID" value="NC_002696.2"/>
</dbReference>
<dbReference type="RefSeq" id="WP_010919079.1">
    <property type="nucleotide sequence ID" value="NC_002696.2"/>
</dbReference>
<dbReference type="SMR" id="Q9A8Z9"/>
<dbReference type="STRING" id="190650.CC_1196"/>
<dbReference type="EnsemblBacteria" id="AAK23179">
    <property type="protein sequence ID" value="AAK23179"/>
    <property type="gene ID" value="CC_1196"/>
</dbReference>
<dbReference type="KEGG" id="ccr:CC_1196"/>
<dbReference type="PATRIC" id="fig|190650.5.peg.1219"/>
<dbReference type="eggNOG" id="COG0691">
    <property type="taxonomic scope" value="Bacteria"/>
</dbReference>
<dbReference type="HOGENOM" id="CLU_108953_0_1_5"/>
<dbReference type="BioCyc" id="CAULO:CC1196-MONOMER"/>
<dbReference type="Proteomes" id="UP000001816">
    <property type="component" value="Chromosome"/>
</dbReference>
<dbReference type="GO" id="GO:0005829">
    <property type="term" value="C:cytosol"/>
    <property type="evidence" value="ECO:0007669"/>
    <property type="project" value="TreeGrafter"/>
</dbReference>
<dbReference type="GO" id="GO:0003723">
    <property type="term" value="F:RNA binding"/>
    <property type="evidence" value="ECO:0007669"/>
    <property type="project" value="UniProtKB-UniRule"/>
</dbReference>
<dbReference type="GO" id="GO:0070929">
    <property type="term" value="P:trans-translation"/>
    <property type="evidence" value="ECO:0007669"/>
    <property type="project" value="UniProtKB-UniRule"/>
</dbReference>
<dbReference type="CDD" id="cd09294">
    <property type="entry name" value="SmpB"/>
    <property type="match status" value="1"/>
</dbReference>
<dbReference type="Gene3D" id="2.40.280.10">
    <property type="match status" value="1"/>
</dbReference>
<dbReference type="HAMAP" id="MF_00023">
    <property type="entry name" value="SmpB"/>
    <property type="match status" value="1"/>
</dbReference>
<dbReference type="InterPro" id="IPR023620">
    <property type="entry name" value="SmpB"/>
</dbReference>
<dbReference type="InterPro" id="IPR000037">
    <property type="entry name" value="SsrA-bd_prot"/>
</dbReference>
<dbReference type="InterPro" id="IPR020081">
    <property type="entry name" value="SsrA-bd_prot_CS"/>
</dbReference>
<dbReference type="NCBIfam" id="NF003843">
    <property type="entry name" value="PRK05422.1"/>
    <property type="match status" value="1"/>
</dbReference>
<dbReference type="NCBIfam" id="TIGR00086">
    <property type="entry name" value="smpB"/>
    <property type="match status" value="1"/>
</dbReference>
<dbReference type="PANTHER" id="PTHR30308:SF2">
    <property type="entry name" value="SSRA-BINDING PROTEIN"/>
    <property type="match status" value="1"/>
</dbReference>
<dbReference type="PANTHER" id="PTHR30308">
    <property type="entry name" value="TMRNA-BINDING COMPONENT OF TRANS-TRANSLATION TAGGING COMPLEX"/>
    <property type="match status" value="1"/>
</dbReference>
<dbReference type="Pfam" id="PF01668">
    <property type="entry name" value="SmpB"/>
    <property type="match status" value="1"/>
</dbReference>
<dbReference type="SUPFAM" id="SSF74982">
    <property type="entry name" value="Small protein B (SmpB)"/>
    <property type="match status" value="1"/>
</dbReference>
<dbReference type="PROSITE" id="PS01317">
    <property type="entry name" value="SSRP"/>
    <property type="match status" value="1"/>
</dbReference>
<sequence>MSKPIAENRRARFDYFIEETFEAGIMLTGTEVKSLRTGRANIAESYASVEGREIVLINADIPPYGHANRFNHEPRRHRKLLLHRRQIDKLIGAVQREGRTLVPIKLYWNDKGLAKLEVGLAKGKKLHDKRDTAAERDWQRDKARLMKGDRGD</sequence>
<evidence type="ECO:0000255" key="1">
    <source>
        <dbReference type="HAMAP-Rule" id="MF_00023"/>
    </source>
</evidence>
<evidence type="ECO:0000256" key="2">
    <source>
        <dbReference type="SAM" id="MobiDB-lite"/>
    </source>
</evidence>
<organism>
    <name type="scientific">Caulobacter vibrioides (strain ATCC 19089 / CIP 103742 / CB 15)</name>
    <name type="common">Caulobacter crescentus</name>
    <dbReference type="NCBI Taxonomy" id="190650"/>
    <lineage>
        <taxon>Bacteria</taxon>
        <taxon>Pseudomonadati</taxon>
        <taxon>Pseudomonadota</taxon>
        <taxon>Alphaproteobacteria</taxon>
        <taxon>Caulobacterales</taxon>
        <taxon>Caulobacteraceae</taxon>
        <taxon>Caulobacter</taxon>
    </lineage>
</organism>
<gene>
    <name evidence="1" type="primary">smpB</name>
    <name type="ordered locus">CC_1196</name>
</gene>
<accession>Q9A8Z9</accession>
<protein>
    <recommendedName>
        <fullName evidence="1">SsrA-binding protein</fullName>
    </recommendedName>
    <alternativeName>
        <fullName evidence="1">Small protein B</fullName>
    </alternativeName>
</protein>
<name>SSRP_CAUVC</name>
<keyword id="KW-0963">Cytoplasm</keyword>
<keyword id="KW-1185">Reference proteome</keyword>
<keyword id="KW-0694">RNA-binding</keyword>
<feature type="chain" id="PRO_0000102927" description="SsrA-binding protein">
    <location>
        <begin position="1"/>
        <end position="152"/>
    </location>
</feature>
<feature type="region of interest" description="Disordered" evidence="2">
    <location>
        <begin position="124"/>
        <end position="152"/>
    </location>
</feature>
<feature type="compositionally biased region" description="Basic and acidic residues" evidence="2">
    <location>
        <begin position="128"/>
        <end position="152"/>
    </location>
</feature>
<comment type="function">
    <text evidence="1">Required for rescue of stalled ribosomes mediated by trans-translation. Binds to transfer-messenger RNA (tmRNA), required for stable association of tmRNA with ribosomes. tmRNA and SmpB together mimic tRNA shape, replacing the anticodon stem-loop with SmpB. tmRNA is encoded by the ssrA gene; the 2 termini fold to resemble tRNA(Ala) and it encodes a 'tag peptide', a short internal open reading frame. During trans-translation Ala-aminoacylated tmRNA acts like a tRNA, entering the A-site of stalled ribosomes, displacing the stalled mRNA. The ribosome then switches to translate the ORF on the tmRNA; the nascent peptide is terminated with the 'tag peptide' encoded by the tmRNA and targeted for degradation. The ribosome is freed to recommence translation, which seems to be the essential function of trans-translation.</text>
</comment>
<comment type="subcellular location">
    <subcellularLocation>
        <location evidence="1">Cytoplasm</location>
    </subcellularLocation>
    <text evidence="1">The tmRNA-SmpB complex associates with stalled 70S ribosomes.</text>
</comment>
<comment type="similarity">
    <text evidence="1">Belongs to the SmpB family.</text>
</comment>
<proteinExistence type="inferred from homology"/>